<organism>
    <name type="scientific">Neisseria meningitidis serogroup A / serotype 4A (strain DSM 15465 / Z2491)</name>
    <dbReference type="NCBI Taxonomy" id="122587"/>
    <lineage>
        <taxon>Bacteria</taxon>
        <taxon>Pseudomonadati</taxon>
        <taxon>Pseudomonadota</taxon>
        <taxon>Betaproteobacteria</taxon>
        <taxon>Neisseriales</taxon>
        <taxon>Neisseriaceae</taxon>
        <taxon>Neisseria</taxon>
    </lineage>
</organism>
<accession>Q9JTZ5</accession>
<accession>A1ISF7</accession>
<reference key="1">
    <citation type="journal article" date="2000" name="Nature">
        <title>Complete DNA sequence of a serogroup A strain of Neisseria meningitidis Z2491.</title>
        <authorList>
            <person name="Parkhill J."/>
            <person name="Achtman M."/>
            <person name="James K.D."/>
            <person name="Bentley S.D."/>
            <person name="Churcher C.M."/>
            <person name="Klee S.R."/>
            <person name="Morelli G."/>
            <person name="Basham D."/>
            <person name="Brown D."/>
            <person name="Chillingworth T."/>
            <person name="Davies R.M."/>
            <person name="Davis P."/>
            <person name="Devlin K."/>
            <person name="Feltwell T."/>
            <person name="Hamlin N."/>
            <person name="Holroyd S."/>
            <person name="Jagels K."/>
            <person name="Leather S."/>
            <person name="Moule S."/>
            <person name="Mungall K.L."/>
            <person name="Quail M.A."/>
            <person name="Rajandream M.A."/>
            <person name="Rutherford K.M."/>
            <person name="Simmonds M."/>
            <person name="Skelton J."/>
            <person name="Whitehead S."/>
            <person name="Spratt B.G."/>
            <person name="Barrell B.G."/>
        </authorList>
    </citation>
    <scope>NUCLEOTIDE SEQUENCE [LARGE SCALE GENOMIC DNA]</scope>
    <source>
        <strain>DSM 15465 / Z2491</strain>
    </source>
</reference>
<gene>
    <name evidence="1" type="primary">gatA</name>
    <name type="ordered locus">NMA1568</name>
</gene>
<comment type="function">
    <text evidence="1">Allows the formation of correctly charged Gln-tRNA(Gln) through the transamidation of misacylated Glu-tRNA(Gln) in organisms which lack glutaminyl-tRNA synthetase. The reaction takes place in the presence of glutamine and ATP through an activated gamma-phospho-Glu-tRNA(Gln).</text>
</comment>
<comment type="catalytic activity">
    <reaction evidence="1">
        <text>L-glutamyl-tRNA(Gln) + L-glutamine + ATP + H2O = L-glutaminyl-tRNA(Gln) + L-glutamate + ADP + phosphate + H(+)</text>
        <dbReference type="Rhea" id="RHEA:17521"/>
        <dbReference type="Rhea" id="RHEA-COMP:9681"/>
        <dbReference type="Rhea" id="RHEA-COMP:9684"/>
        <dbReference type="ChEBI" id="CHEBI:15377"/>
        <dbReference type="ChEBI" id="CHEBI:15378"/>
        <dbReference type="ChEBI" id="CHEBI:29985"/>
        <dbReference type="ChEBI" id="CHEBI:30616"/>
        <dbReference type="ChEBI" id="CHEBI:43474"/>
        <dbReference type="ChEBI" id="CHEBI:58359"/>
        <dbReference type="ChEBI" id="CHEBI:78520"/>
        <dbReference type="ChEBI" id="CHEBI:78521"/>
        <dbReference type="ChEBI" id="CHEBI:456216"/>
        <dbReference type="EC" id="6.3.5.7"/>
    </reaction>
</comment>
<comment type="subunit">
    <text evidence="1">Heterotrimer of A, B and C subunits.</text>
</comment>
<comment type="similarity">
    <text evidence="1">Belongs to the amidase family. GatA subfamily.</text>
</comment>
<keyword id="KW-0067">ATP-binding</keyword>
<keyword id="KW-0436">Ligase</keyword>
<keyword id="KW-0547">Nucleotide-binding</keyword>
<keyword id="KW-0648">Protein biosynthesis</keyword>
<dbReference type="EC" id="6.3.5.7" evidence="1"/>
<dbReference type="EMBL" id="AL157959">
    <property type="protein sequence ID" value="CAM08713.1"/>
    <property type="molecule type" value="Genomic_DNA"/>
</dbReference>
<dbReference type="PIR" id="C81849">
    <property type="entry name" value="C81849"/>
</dbReference>
<dbReference type="RefSeq" id="WP_002245979.1">
    <property type="nucleotide sequence ID" value="NC_003116.1"/>
</dbReference>
<dbReference type="SMR" id="Q9JTZ5"/>
<dbReference type="EnsemblBacteria" id="CAM08713">
    <property type="protein sequence ID" value="CAM08713"/>
    <property type="gene ID" value="NMA1568"/>
</dbReference>
<dbReference type="GeneID" id="93385845"/>
<dbReference type="KEGG" id="nma:NMA1568"/>
<dbReference type="HOGENOM" id="CLU_009600_0_3_4"/>
<dbReference type="Proteomes" id="UP000000626">
    <property type="component" value="Chromosome"/>
</dbReference>
<dbReference type="GO" id="GO:0030956">
    <property type="term" value="C:glutamyl-tRNA(Gln) amidotransferase complex"/>
    <property type="evidence" value="ECO:0007669"/>
    <property type="project" value="InterPro"/>
</dbReference>
<dbReference type="GO" id="GO:0005524">
    <property type="term" value="F:ATP binding"/>
    <property type="evidence" value="ECO:0007669"/>
    <property type="project" value="UniProtKB-KW"/>
</dbReference>
<dbReference type="GO" id="GO:0050567">
    <property type="term" value="F:glutaminyl-tRNA synthase (glutamine-hydrolyzing) activity"/>
    <property type="evidence" value="ECO:0007669"/>
    <property type="project" value="UniProtKB-UniRule"/>
</dbReference>
<dbReference type="GO" id="GO:0006412">
    <property type="term" value="P:translation"/>
    <property type="evidence" value="ECO:0007669"/>
    <property type="project" value="UniProtKB-UniRule"/>
</dbReference>
<dbReference type="Gene3D" id="3.90.1300.10">
    <property type="entry name" value="Amidase signature (AS) domain"/>
    <property type="match status" value="1"/>
</dbReference>
<dbReference type="HAMAP" id="MF_00120">
    <property type="entry name" value="GatA"/>
    <property type="match status" value="1"/>
</dbReference>
<dbReference type="InterPro" id="IPR000120">
    <property type="entry name" value="Amidase"/>
</dbReference>
<dbReference type="InterPro" id="IPR020556">
    <property type="entry name" value="Amidase_CS"/>
</dbReference>
<dbReference type="InterPro" id="IPR023631">
    <property type="entry name" value="Amidase_dom"/>
</dbReference>
<dbReference type="InterPro" id="IPR036928">
    <property type="entry name" value="AS_sf"/>
</dbReference>
<dbReference type="InterPro" id="IPR004412">
    <property type="entry name" value="GatA"/>
</dbReference>
<dbReference type="NCBIfam" id="TIGR00132">
    <property type="entry name" value="gatA"/>
    <property type="match status" value="1"/>
</dbReference>
<dbReference type="PANTHER" id="PTHR11895:SF151">
    <property type="entry name" value="GLUTAMYL-TRNA(GLN) AMIDOTRANSFERASE SUBUNIT A"/>
    <property type="match status" value="1"/>
</dbReference>
<dbReference type="PANTHER" id="PTHR11895">
    <property type="entry name" value="TRANSAMIDASE"/>
    <property type="match status" value="1"/>
</dbReference>
<dbReference type="Pfam" id="PF01425">
    <property type="entry name" value="Amidase"/>
    <property type="match status" value="1"/>
</dbReference>
<dbReference type="SUPFAM" id="SSF75304">
    <property type="entry name" value="Amidase signature (AS) enzymes"/>
    <property type="match status" value="1"/>
</dbReference>
<dbReference type="PROSITE" id="PS00571">
    <property type="entry name" value="AMIDASES"/>
    <property type="match status" value="1"/>
</dbReference>
<sequence length="481" mass="51338">MTQYTLKQASVLLQSKQISAVELASAYLAAIAEKNPALNGYITIDQDKTLAEARAADERIAQGNASALTGIPVAYKDIFCQTGWRSACASKMLDNFISPYTATVVQKLLDEGMVTLGRTNMDEFAMGSTNENSFYGAAKNPWNPEHVPGGSSGGSAAVVAARLAPAALGSDTGGSIRQPASHCGITGIKPTYGTVSRFGMVAYASSFDQAGPMAQTAEDCAILLNAMAGFDPKDSTSLEREKEDYTRDLNQPLKGLKIGLPKEYFGEGNSADVLTALQNTIDLLKAQGAELIEVSLPQTKLSIPAYYVLASAEASTNLSRYDGVRYGHRAAQFSDLEEMYGKTRAEGFGSEVKRRIMIGTYVLSHGYYDAYYLKAQKLRRLVADDFQTAFARCDLILAPTAPSAAPKIGADASPVETYLSDIYTIAVNLAGLPALTLPAGFSSGGLPIGVQLIGNYFSEAKILGAAHQIQLNSDWHGKRPE</sequence>
<feature type="chain" id="PRO_0000105182" description="Glutamyl-tRNA(Gln) amidotransferase subunit A">
    <location>
        <begin position="1"/>
        <end position="481"/>
    </location>
</feature>
<feature type="active site" description="Charge relay system" evidence="1">
    <location>
        <position position="76"/>
    </location>
</feature>
<feature type="active site" description="Charge relay system" evidence="1">
    <location>
        <position position="151"/>
    </location>
</feature>
<feature type="active site" description="Acyl-ester intermediate" evidence="1">
    <location>
        <position position="175"/>
    </location>
</feature>
<proteinExistence type="inferred from homology"/>
<name>GATA_NEIMA</name>
<protein>
    <recommendedName>
        <fullName evidence="1">Glutamyl-tRNA(Gln) amidotransferase subunit A</fullName>
        <shortName evidence="1">Glu-ADT subunit A</shortName>
        <ecNumber evidence="1">6.3.5.7</ecNumber>
    </recommendedName>
</protein>
<evidence type="ECO:0000255" key="1">
    <source>
        <dbReference type="HAMAP-Rule" id="MF_00120"/>
    </source>
</evidence>